<dbReference type="EC" id="3.2.2.-"/>
<dbReference type="EC" id="4.2.99.18"/>
<dbReference type="EMBL" id="AL939125">
    <property type="protein sequence ID" value="CAA19861.1"/>
    <property type="molecule type" value="Genomic_DNA"/>
</dbReference>
<dbReference type="PIR" id="T35693">
    <property type="entry name" value="T35693"/>
</dbReference>
<dbReference type="RefSeq" id="NP_629885.1">
    <property type="nucleotide sequence ID" value="NC_003888.3"/>
</dbReference>
<dbReference type="RefSeq" id="WP_011030437.1">
    <property type="nucleotide sequence ID" value="NZ_VNID01000007.1"/>
</dbReference>
<dbReference type="SMR" id="O86820"/>
<dbReference type="FunCoup" id="O86820">
    <property type="interactions" value="1"/>
</dbReference>
<dbReference type="STRING" id="100226.gene:17763420"/>
<dbReference type="PaxDb" id="100226-SCO5760"/>
<dbReference type="KEGG" id="sco:SCO5760"/>
<dbReference type="PATRIC" id="fig|100226.15.peg.5849"/>
<dbReference type="eggNOG" id="COG0266">
    <property type="taxonomic scope" value="Bacteria"/>
</dbReference>
<dbReference type="HOGENOM" id="CLU_038423_2_0_11"/>
<dbReference type="InParanoid" id="O86820"/>
<dbReference type="OrthoDB" id="9800855at2"/>
<dbReference type="PhylomeDB" id="O86820"/>
<dbReference type="Proteomes" id="UP000001973">
    <property type="component" value="Chromosome"/>
</dbReference>
<dbReference type="GO" id="GO:0140078">
    <property type="term" value="F:class I DNA-(apurinic or apyrimidinic site) endonuclease activity"/>
    <property type="evidence" value="ECO:0007669"/>
    <property type="project" value="UniProtKB-EC"/>
</dbReference>
<dbReference type="GO" id="GO:0003684">
    <property type="term" value="F:damaged DNA binding"/>
    <property type="evidence" value="ECO:0007669"/>
    <property type="project" value="InterPro"/>
</dbReference>
<dbReference type="GO" id="GO:0003906">
    <property type="term" value="F:DNA-(apurinic or apyrimidinic site) endonuclease activity"/>
    <property type="evidence" value="ECO:0000318"/>
    <property type="project" value="GO_Central"/>
</dbReference>
<dbReference type="GO" id="GO:0000703">
    <property type="term" value="F:oxidized pyrimidine nucleobase lesion DNA N-glycosylase activity"/>
    <property type="evidence" value="ECO:0000318"/>
    <property type="project" value="GO_Central"/>
</dbReference>
<dbReference type="GO" id="GO:0008270">
    <property type="term" value="F:zinc ion binding"/>
    <property type="evidence" value="ECO:0007669"/>
    <property type="project" value="UniProtKB-KW"/>
</dbReference>
<dbReference type="GO" id="GO:0006284">
    <property type="term" value="P:base-excision repair"/>
    <property type="evidence" value="ECO:0000318"/>
    <property type="project" value="GO_Central"/>
</dbReference>
<dbReference type="CDD" id="cd08971">
    <property type="entry name" value="AcNei2_N"/>
    <property type="match status" value="1"/>
</dbReference>
<dbReference type="FunFam" id="1.10.8.50:FF:000005">
    <property type="entry name" value="Endonuclease 8"/>
    <property type="match status" value="1"/>
</dbReference>
<dbReference type="FunFam" id="3.20.190.10:FF:000002">
    <property type="entry name" value="Endonuclease 8"/>
    <property type="match status" value="1"/>
</dbReference>
<dbReference type="Gene3D" id="1.10.8.50">
    <property type="match status" value="1"/>
</dbReference>
<dbReference type="Gene3D" id="3.20.190.10">
    <property type="entry name" value="MutM-like, N-terminal"/>
    <property type="match status" value="1"/>
</dbReference>
<dbReference type="InterPro" id="IPR015886">
    <property type="entry name" value="DNA_glyclase/AP_lyase_DNA-bd"/>
</dbReference>
<dbReference type="InterPro" id="IPR015887">
    <property type="entry name" value="DNA_glyclase_Znf_dom_DNA_BS"/>
</dbReference>
<dbReference type="InterPro" id="IPR012319">
    <property type="entry name" value="FPG_cat"/>
</dbReference>
<dbReference type="InterPro" id="IPR035937">
    <property type="entry name" value="MutM-like_N-ter"/>
</dbReference>
<dbReference type="InterPro" id="IPR044090">
    <property type="entry name" value="Nei2_N"/>
</dbReference>
<dbReference type="InterPro" id="IPR010979">
    <property type="entry name" value="Ribosomal_uS13-like_H2TH"/>
</dbReference>
<dbReference type="InterPro" id="IPR000214">
    <property type="entry name" value="Znf_DNA_glyclase/AP_lyase"/>
</dbReference>
<dbReference type="PANTHER" id="PTHR42697">
    <property type="entry name" value="ENDONUCLEASE 8"/>
    <property type="match status" value="1"/>
</dbReference>
<dbReference type="PANTHER" id="PTHR42697:SF1">
    <property type="entry name" value="ENDONUCLEASE 8"/>
    <property type="match status" value="1"/>
</dbReference>
<dbReference type="Pfam" id="PF01149">
    <property type="entry name" value="Fapy_DNA_glyco"/>
    <property type="match status" value="1"/>
</dbReference>
<dbReference type="Pfam" id="PF06831">
    <property type="entry name" value="H2TH"/>
    <property type="match status" value="1"/>
</dbReference>
<dbReference type="SMART" id="SM00898">
    <property type="entry name" value="Fapy_DNA_glyco"/>
    <property type="match status" value="1"/>
</dbReference>
<dbReference type="SMART" id="SM01232">
    <property type="entry name" value="H2TH"/>
    <property type="match status" value="1"/>
</dbReference>
<dbReference type="SUPFAM" id="SSF57716">
    <property type="entry name" value="Glucocorticoid receptor-like (DNA-binding domain)"/>
    <property type="match status" value="1"/>
</dbReference>
<dbReference type="SUPFAM" id="SSF81624">
    <property type="entry name" value="N-terminal domain of MutM-like DNA repair proteins"/>
    <property type="match status" value="1"/>
</dbReference>
<dbReference type="SUPFAM" id="SSF46946">
    <property type="entry name" value="S13-like H2TH domain"/>
    <property type="match status" value="1"/>
</dbReference>
<dbReference type="PROSITE" id="PS51068">
    <property type="entry name" value="FPG_CAT"/>
    <property type="match status" value="1"/>
</dbReference>
<dbReference type="PROSITE" id="PS01242">
    <property type="entry name" value="ZF_FPG_1"/>
    <property type="match status" value="1"/>
</dbReference>
<dbReference type="PROSITE" id="PS51066">
    <property type="entry name" value="ZF_FPG_2"/>
    <property type="match status" value="1"/>
</dbReference>
<proteinExistence type="inferred from homology"/>
<comment type="function">
    <text evidence="3">Involved in base excision repair of DNA damaged by oxidation or by mutagenic agents. Acts as a DNA glycosylase that recognizes and removes damaged bases. Has AP (apurinic/apyrimidinic) lyase activity and introduces nicks in the DNA strand. Cleaves the DNA backbone by beta-delta elimination to generate a single-strand break at the site of the removed base with both 3'- and 5'-phosphates.</text>
</comment>
<comment type="catalytic activity">
    <reaction evidence="3">
        <text>2'-deoxyribonucleotide-(2'-deoxyribose 5'-phosphate)-2'-deoxyribonucleotide-DNA = a 3'-end 2'-deoxyribonucleotide-(2,3-dehydro-2,3-deoxyribose 5'-phosphate)-DNA + a 5'-end 5'-phospho-2'-deoxyribonucleoside-DNA + H(+)</text>
        <dbReference type="Rhea" id="RHEA:66592"/>
        <dbReference type="Rhea" id="RHEA-COMP:13180"/>
        <dbReference type="Rhea" id="RHEA-COMP:16897"/>
        <dbReference type="Rhea" id="RHEA-COMP:17067"/>
        <dbReference type="ChEBI" id="CHEBI:15378"/>
        <dbReference type="ChEBI" id="CHEBI:136412"/>
        <dbReference type="ChEBI" id="CHEBI:157695"/>
        <dbReference type="ChEBI" id="CHEBI:167181"/>
        <dbReference type="EC" id="4.2.99.18"/>
    </reaction>
</comment>
<comment type="cofactor">
    <cofactor evidence="2">
        <name>Zn(2+)</name>
        <dbReference type="ChEBI" id="CHEBI:29105"/>
    </cofactor>
    <text evidence="2">Binds 1 zinc ion per subunit.</text>
</comment>
<comment type="similarity">
    <text evidence="3">Belongs to the FPG family.</text>
</comment>
<reference key="1">
    <citation type="journal article" date="2002" name="Nature">
        <title>Complete genome sequence of the model actinomycete Streptomyces coelicolor A3(2).</title>
        <authorList>
            <person name="Bentley S.D."/>
            <person name="Chater K.F."/>
            <person name="Cerdeno-Tarraga A.-M."/>
            <person name="Challis G.L."/>
            <person name="Thomson N.R."/>
            <person name="James K.D."/>
            <person name="Harris D.E."/>
            <person name="Quail M.A."/>
            <person name="Kieser H."/>
            <person name="Harper D."/>
            <person name="Bateman A."/>
            <person name="Brown S."/>
            <person name="Chandra G."/>
            <person name="Chen C.W."/>
            <person name="Collins M."/>
            <person name="Cronin A."/>
            <person name="Fraser A."/>
            <person name="Goble A."/>
            <person name="Hidalgo J."/>
            <person name="Hornsby T."/>
            <person name="Howarth S."/>
            <person name="Huang C.-H."/>
            <person name="Kieser T."/>
            <person name="Larke L."/>
            <person name="Murphy L.D."/>
            <person name="Oliver K."/>
            <person name="O'Neil S."/>
            <person name="Rabbinowitsch E."/>
            <person name="Rajandream M.A."/>
            <person name="Rutherford K.M."/>
            <person name="Rutter S."/>
            <person name="Seeger K."/>
            <person name="Saunders D."/>
            <person name="Sharp S."/>
            <person name="Squares R."/>
            <person name="Squares S."/>
            <person name="Taylor K."/>
            <person name="Warren T."/>
            <person name="Wietzorrek A."/>
            <person name="Woodward J.R."/>
            <person name="Barrell B.G."/>
            <person name="Parkhill J."/>
            <person name="Hopwood D.A."/>
        </authorList>
    </citation>
    <scope>NUCLEOTIDE SEQUENCE [LARGE SCALE GENOMIC DNA]</scope>
    <source>
        <strain>ATCC BAA-471 / A3(2) / M145</strain>
    </source>
</reference>
<protein>
    <recommendedName>
        <fullName>Probable endonuclease 8 2</fullName>
    </recommendedName>
    <alternativeName>
        <fullName>DNA glycosylase/AP lyase Nei 2</fullName>
        <ecNumber>3.2.2.-</ecNumber>
    </alternativeName>
    <alternativeName>
        <fullName>DNA-(apurinic or apyrimidinic site) lyase Nei 2</fullName>
        <ecNumber>4.2.99.18</ecNumber>
    </alternativeName>
    <alternativeName>
        <fullName>Endonuclease VIII 2</fullName>
    </alternativeName>
</protein>
<evidence type="ECO:0000250" key="1"/>
<evidence type="ECO:0000255" key="2">
    <source>
        <dbReference type="PROSITE-ProRule" id="PRU00391"/>
    </source>
</evidence>
<evidence type="ECO:0000255" key="3">
    <source>
        <dbReference type="PROSITE-ProRule" id="PRU00392"/>
    </source>
</evidence>
<sequence>MPEGDTVWQAARRLHDALAGRVLTRSDFRVPRYATVDLTGRTVLDVTPRGKHLLTRVEGGLTVHSHLRMDGSWKVFAPGQRWSGGPAHQIRVILGTADRTAVGYRLPVLDILRTAEEQRAVGHLGPDLLGPDWDPERALDNLRADPPRALGEALLDQRNLAGIGNVYKSELCFLLGVTPWLPVGELPADRAARLPTLAKKLLEANRDRPVRRTTGLRGQDLFVYGRAPRPCLRCGTSVRVADQGDGSRERPTYWCPTCQAGPAPRPGGRTGVRPRR</sequence>
<accession>O86820</accession>
<organism>
    <name type="scientific">Streptomyces coelicolor (strain ATCC BAA-471 / A3(2) / M145)</name>
    <dbReference type="NCBI Taxonomy" id="100226"/>
    <lineage>
        <taxon>Bacteria</taxon>
        <taxon>Bacillati</taxon>
        <taxon>Actinomycetota</taxon>
        <taxon>Actinomycetes</taxon>
        <taxon>Kitasatosporales</taxon>
        <taxon>Streptomycetaceae</taxon>
        <taxon>Streptomyces</taxon>
        <taxon>Streptomyces albidoflavus group</taxon>
    </lineage>
</organism>
<keyword id="KW-0227">DNA damage</keyword>
<keyword id="KW-0234">DNA repair</keyword>
<keyword id="KW-0238">DNA-binding</keyword>
<keyword id="KW-0326">Glycosidase</keyword>
<keyword id="KW-0378">Hydrolase</keyword>
<keyword id="KW-0456">Lyase</keyword>
<keyword id="KW-0479">Metal-binding</keyword>
<keyword id="KW-0511">Multifunctional enzyme</keyword>
<keyword id="KW-1185">Reference proteome</keyword>
<keyword id="KW-0862">Zinc</keyword>
<keyword id="KW-0863">Zinc-finger</keyword>
<feature type="initiator methionine" description="Removed" evidence="1">
    <location>
        <position position="1"/>
    </location>
</feature>
<feature type="chain" id="PRO_0000170902" description="Probable endonuclease 8 2">
    <location>
        <begin position="2"/>
        <end position="276"/>
    </location>
</feature>
<feature type="zinc finger region" description="FPG-type" evidence="2">
    <location>
        <begin position="222"/>
        <end position="260"/>
    </location>
</feature>
<feature type="active site" description="Schiff-base intermediate with DNA" evidence="3">
    <location>
        <position position="2"/>
    </location>
</feature>
<feature type="active site" description="Proton donor" evidence="3">
    <location>
        <position position="3"/>
    </location>
</feature>
<feature type="active site" description="Proton donor; for beta-elimination activity" evidence="3">
    <location>
        <position position="51"/>
    </location>
</feature>
<feature type="active site" description="Proton donor; for delta-elimination activity" evidence="3">
    <location>
        <position position="250"/>
    </location>
</feature>
<feature type="binding site" evidence="1">
    <location>
        <position position="165"/>
    </location>
    <ligand>
        <name>DNA</name>
        <dbReference type="ChEBI" id="CHEBI:16991"/>
    </ligand>
</feature>
<name>END8B_STRCO</name>
<gene>
    <name type="primary">nei</name>
    <name type="ordered locus">SCO5760</name>
    <name type="ORF">SC7C7.15c</name>
</gene>